<name>NUSA_ECO57</name>
<dbReference type="EMBL" id="AE005174">
    <property type="protein sequence ID" value="AAG58305.1"/>
    <property type="molecule type" value="Genomic_DNA"/>
</dbReference>
<dbReference type="EMBL" id="BA000007">
    <property type="protein sequence ID" value="BAB37473.1"/>
    <property type="molecule type" value="Genomic_DNA"/>
</dbReference>
<dbReference type="PIR" id="B91135">
    <property type="entry name" value="B91135"/>
</dbReference>
<dbReference type="PIR" id="E85980">
    <property type="entry name" value="E85980"/>
</dbReference>
<dbReference type="RefSeq" id="NP_312077.1">
    <property type="nucleotide sequence ID" value="NC_002695.1"/>
</dbReference>
<dbReference type="RefSeq" id="WP_001031057.1">
    <property type="nucleotide sequence ID" value="NZ_VOAI01000014.1"/>
</dbReference>
<dbReference type="BMRB" id="P0AFF8"/>
<dbReference type="EMDB" id="EMD-42504"/>
<dbReference type="SMR" id="P0AFF8"/>
<dbReference type="STRING" id="155864.Z4530"/>
<dbReference type="GeneID" id="916098"/>
<dbReference type="GeneID" id="93778814"/>
<dbReference type="KEGG" id="ece:Z4530"/>
<dbReference type="KEGG" id="ecs:ECs_4050"/>
<dbReference type="PATRIC" id="fig|386585.9.peg.4229"/>
<dbReference type="eggNOG" id="COG0195">
    <property type="taxonomic scope" value="Bacteria"/>
</dbReference>
<dbReference type="HOGENOM" id="CLU_029242_0_0_6"/>
<dbReference type="OMA" id="MKGSRIH"/>
<dbReference type="Proteomes" id="UP000000558">
    <property type="component" value="Chromosome"/>
</dbReference>
<dbReference type="Proteomes" id="UP000002519">
    <property type="component" value="Chromosome"/>
</dbReference>
<dbReference type="GO" id="GO:0005829">
    <property type="term" value="C:cytosol"/>
    <property type="evidence" value="ECO:0007669"/>
    <property type="project" value="TreeGrafter"/>
</dbReference>
<dbReference type="GO" id="GO:0003700">
    <property type="term" value="F:DNA-binding transcription factor activity"/>
    <property type="evidence" value="ECO:0007669"/>
    <property type="project" value="InterPro"/>
</dbReference>
<dbReference type="GO" id="GO:0000166">
    <property type="term" value="F:nucleotide binding"/>
    <property type="evidence" value="ECO:0007669"/>
    <property type="project" value="InterPro"/>
</dbReference>
<dbReference type="GO" id="GO:0003723">
    <property type="term" value="F:RNA binding"/>
    <property type="evidence" value="ECO:0007669"/>
    <property type="project" value="UniProtKB-UniRule"/>
</dbReference>
<dbReference type="GO" id="GO:0006353">
    <property type="term" value="P:DNA-templated transcription termination"/>
    <property type="evidence" value="ECO:0007669"/>
    <property type="project" value="UniProtKB-UniRule"/>
</dbReference>
<dbReference type="GO" id="GO:0031564">
    <property type="term" value="P:transcription antitermination"/>
    <property type="evidence" value="ECO:0007669"/>
    <property type="project" value="UniProtKB-UniRule"/>
</dbReference>
<dbReference type="CDD" id="cd02134">
    <property type="entry name" value="KH-II_NusA_rpt1"/>
    <property type="match status" value="1"/>
</dbReference>
<dbReference type="CDD" id="cd22529">
    <property type="entry name" value="KH-II_NusA_rpt2"/>
    <property type="match status" value="1"/>
</dbReference>
<dbReference type="CDD" id="cd04455">
    <property type="entry name" value="S1_NusA"/>
    <property type="match status" value="1"/>
</dbReference>
<dbReference type="FunFam" id="1.10.150.20:FF:000015">
    <property type="entry name" value="Transcription termination/antitermination protein NusA"/>
    <property type="match status" value="1"/>
</dbReference>
<dbReference type="FunFam" id="1.10.150.20:FF:000018">
    <property type="entry name" value="Transcription termination/antitermination protein NusA"/>
    <property type="match status" value="1"/>
</dbReference>
<dbReference type="FunFam" id="2.40.50.140:FF:000092">
    <property type="entry name" value="Transcription termination/antitermination protein NusA"/>
    <property type="match status" value="1"/>
</dbReference>
<dbReference type="FunFam" id="3.30.1480.10:FF:000001">
    <property type="entry name" value="Transcription termination/antitermination protein NusA"/>
    <property type="match status" value="1"/>
</dbReference>
<dbReference type="FunFam" id="3.30.300.20:FF:000002">
    <property type="entry name" value="Transcription termination/antitermination protein NusA"/>
    <property type="match status" value="1"/>
</dbReference>
<dbReference type="FunFam" id="3.30.300.20:FF:000005">
    <property type="entry name" value="Transcription termination/antitermination protein NusA"/>
    <property type="match status" value="1"/>
</dbReference>
<dbReference type="Gene3D" id="3.30.300.20">
    <property type="match status" value="2"/>
</dbReference>
<dbReference type="Gene3D" id="1.10.150.20">
    <property type="entry name" value="5' to 3' exonuclease, C-terminal subdomain"/>
    <property type="match status" value="2"/>
</dbReference>
<dbReference type="Gene3D" id="2.40.50.140">
    <property type="entry name" value="Nucleic acid-binding proteins"/>
    <property type="match status" value="1"/>
</dbReference>
<dbReference type="Gene3D" id="3.30.1480.10">
    <property type="entry name" value="NusA, N-terminal domain"/>
    <property type="match status" value="1"/>
</dbReference>
<dbReference type="HAMAP" id="MF_00945_B">
    <property type="entry name" value="NusA_B"/>
    <property type="match status" value="1"/>
</dbReference>
<dbReference type="InterPro" id="IPR010995">
    <property type="entry name" value="DNA_repair_Rad51/TF_NusA_a-hlx"/>
</dbReference>
<dbReference type="InterPro" id="IPR015946">
    <property type="entry name" value="KH_dom-like_a/b"/>
</dbReference>
<dbReference type="InterPro" id="IPR025249">
    <property type="entry name" value="KH_dom_NusA-like"/>
</dbReference>
<dbReference type="InterPro" id="IPR009019">
    <property type="entry name" value="KH_sf_prok-type"/>
</dbReference>
<dbReference type="InterPro" id="IPR012340">
    <property type="entry name" value="NA-bd_OB-fold"/>
</dbReference>
<dbReference type="InterPro" id="IPR030842">
    <property type="entry name" value="NusA_bac"/>
</dbReference>
<dbReference type="InterPro" id="IPR036555">
    <property type="entry name" value="NusA_N_sf"/>
</dbReference>
<dbReference type="InterPro" id="IPR003029">
    <property type="entry name" value="S1_domain"/>
</dbReference>
<dbReference type="InterPro" id="IPR013735">
    <property type="entry name" value="TF_NusA_N"/>
</dbReference>
<dbReference type="InterPro" id="IPR010214">
    <property type="entry name" value="Tscrpt_termin_fac_NusA_C_rpt"/>
</dbReference>
<dbReference type="InterPro" id="IPR010213">
    <property type="entry name" value="Tscrpt_termination_fac_NusA"/>
</dbReference>
<dbReference type="NCBIfam" id="TIGR01953">
    <property type="entry name" value="NusA"/>
    <property type="match status" value="1"/>
</dbReference>
<dbReference type="NCBIfam" id="TIGR01954">
    <property type="entry name" value="nusA_Cterm_rpt"/>
    <property type="match status" value="2"/>
</dbReference>
<dbReference type="PANTHER" id="PTHR22648">
    <property type="entry name" value="TRANSCRIPTION TERMINATION FACTOR NUSA"/>
    <property type="match status" value="1"/>
</dbReference>
<dbReference type="PANTHER" id="PTHR22648:SF0">
    <property type="entry name" value="TRANSCRIPTION TERMINATION_ANTITERMINATION PROTEIN NUSA"/>
    <property type="match status" value="1"/>
</dbReference>
<dbReference type="Pfam" id="PF14520">
    <property type="entry name" value="HHH_5"/>
    <property type="match status" value="1"/>
</dbReference>
<dbReference type="Pfam" id="PF13184">
    <property type="entry name" value="KH_5"/>
    <property type="match status" value="1"/>
</dbReference>
<dbReference type="Pfam" id="PF08529">
    <property type="entry name" value="NusA_N"/>
    <property type="match status" value="1"/>
</dbReference>
<dbReference type="Pfam" id="PF00575">
    <property type="entry name" value="S1"/>
    <property type="match status" value="1"/>
</dbReference>
<dbReference type="SMART" id="SM00316">
    <property type="entry name" value="S1"/>
    <property type="match status" value="1"/>
</dbReference>
<dbReference type="SUPFAM" id="SSF50249">
    <property type="entry name" value="Nucleic acid-binding proteins"/>
    <property type="match status" value="1"/>
</dbReference>
<dbReference type="SUPFAM" id="SSF54814">
    <property type="entry name" value="Prokaryotic type KH domain (KH-domain type II)"/>
    <property type="match status" value="2"/>
</dbReference>
<dbReference type="SUPFAM" id="SSF47794">
    <property type="entry name" value="Rad51 N-terminal domain-like"/>
    <property type="match status" value="2"/>
</dbReference>
<dbReference type="SUPFAM" id="SSF69705">
    <property type="entry name" value="Transcription factor NusA, N-terminal domain"/>
    <property type="match status" value="1"/>
</dbReference>
<dbReference type="PROSITE" id="PS50084">
    <property type="entry name" value="KH_TYPE_1"/>
    <property type="match status" value="1"/>
</dbReference>
<dbReference type="PROSITE" id="PS50126">
    <property type="entry name" value="S1"/>
    <property type="match status" value="1"/>
</dbReference>
<comment type="function">
    <text evidence="1">Participates in both transcription termination and antitermination.</text>
</comment>
<comment type="subunit">
    <text evidence="1">Monomer. Binds directly to the core enzyme of the DNA-dependent RNA polymerase and to nascent RNA.</text>
</comment>
<comment type="subcellular location">
    <subcellularLocation>
        <location evidence="1">Cytoplasm</location>
    </subcellularLocation>
</comment>
<comment type="similarity">
    <text evidence="1">Belongs to the NusA family.</text>
</comment>
<feature type="chain" id="PRO_0000181966" description="Transcription termination/antitermination protein NusA">
    <location>
        <begin position="1"/>
        <end position="495"/>
    </location>
</feature>
<feature type="domain" description="S1 motif" evidence="1">
    <location>
        <begin position="135"/>
        <end position="200"/>
    </location>
</feature>
<feature type="domain" description="KH" evidence="1">
    <location>
        <begin position="302"/>
        <end position="368"/>
    </location>
</feature>
<feature type="repeat" description="1">
    <location>
        <begin position="364"/>
        <end position="414"/>
    </location>
</feature>
<feature type="repeat" description="2">
    <location>
        <begin position="439"/>
        <end position="489"/>
    </location>
</feature>
<feature type="region of interest" description="2 X 51 AA approximate repeats">
    <location>
        <begin position="364"/>
        <end position="489"/>
    </location>
</feature>
<keyword id="KW-0963">Cytoplasm</keyword>
<keyword id="KW-1185">Reference proteome</keyword>
<keyword id="KW-0677">Repeat</keyword>
<keyword id="KW-0694">RNA-binding</keyword>
<keyword id="KW-0804">Transcription</keyword>
<keyword id="KW-0889">Transcription antitermination</keyword>
<keyword id="KW-0805">Transcription regulation</keyword>
<keyword id="KW-0806">Transcription termination</keyword>
<accession>P0AFF8</accession>
<accession>P03003</accession>
<proteinExistence type="inferred from homology"/>
<sequence>MNKEILAVVEAVSNEKALPREKIFEALESALATATKKKYEQEIDVRVQIDRKSGDFDTFRRWLVVDEVTQPTKEITLEAARYEDESLNLGDYVEDQIESVTFDRITTQTAKQVIVQKVREAERAMVVDQFREHEGEIITGVVKKVNRDNISLDLGNNAEAVILREDMLPRENFRPGDRVRGVLYSVRPEARGAQLFVTRSKPEMLIELFRIEVPEIGEEVIEIKAAARDPGSRAKIAVKTNDKRIDPVGACVGMRGARVQAVSTELGGERIDIVLWDDNPAQFVINAMAPADVASIVVDEDKHTMDIAVEAGNLAQAIGRNGQNVRLASQLSGWELNVMTVDDLQAKHQAEAHAAIDTFTKYLDIDEDFATVLVEEGFSTLEELAYVPMKELLEIEGLDEPTVEALRERAKNALATIAQAQEESLGDNKPADDLLNLEGVDRDLAFKLAARGVCTLEDLAEQGIDDLADIEGLTDEKAGALIMAARNICWFGDEA</sequence>
<organism>
    <name type="scientific">Escherichia coli O157:H7</name>
    <dbReference type="NCBI Taxonomy" id="83334"/>
    <lineage>
        <taxon>Bacteria</taxon>
        <taxon>Pseudomonadati</taxon>
        <taxon>Pseudomonadota</taxon>
        <taxon>Gammaproteobacteria</taxon>
        <taxon>Enterobacterales</taxon>
        <taxon>Enterobacteriaceae</taxon>
        <taxon>Escherichia</taxon>
    </lineage>
</organism>
<reference key="1">
    <citation type="journal article" date="2001" name="Nature">
        <title>Genome sequence of enterohaemorrhagic Escherichia coli O157:H7.</title>
        <authorList>
            <person name="Perna N.T."/>
            <person name="Plunkett G. III"/>
            <person name="Burland V."/>
            <person name="Mau B."/>
            <person name="Glasner J.D."/>
            <person name="Rose D.J."/>
            <person name="Mayhew G.F."/>
            <person name="Evans P.S."/>
            <person name="Gregor J."/>
            <person name="Kirkpatrick H.A."/>
            <person name="Posfai G."/>
            <person name="Hackett J."/>
            <person name="Klink S."/>
            <person name="Boutin A."/>
            <person name="Shao Y."/>
            <person name="Miller L."/>
            <person name="Grotbeck E.J."/>
            <person name="Davis N.W."/>
            <person name="Lim A."/>
            <person name="Dimalanta E.T."/>
            <person name="Potamousis K."/>
            <person name="Apodaca J."/>
            <person name="Anantharaman T.S."/>
            <person name="Lin J."/>
            <person name="Yen G."/>
            <person name="Schwartz D.C."/>
            <person name="Welch R.A."/>
            <person name="Blattner F.R."/>
        </authorList>
    </citation>
    <scope>NUCLEOTIDE SEQUENCE [LARGE SCALE GENOMIC DNA]</scope>
    <source>
        <strain>O157:H7 / EDL933 / ATCC 700927 / EHEC</strain>
    </source>
</reference>
<reference key="2">
    <citation type="journal article" date="2001" name="DNA Res.">
        <title>Complete genome sequence of enterohemorrhagic Escherichia coli O157:H7 and genomic comparison with a laboratory strain K-12.</title>
        <authorList>
            <person name="Hayashi T."/>
            <person name="Makino K."/>
            <person name="Ohnishi M."/>
            <person name="Kurokawa K."/>
            <person name="Ishii K."/>
            <person name="Yokoyama K."/>
            <person name="Han C.-G."/>
            <person name="Ohtsubo E."/>
            <person name="Nakayama K."/>
            <person name="Murata T."/>
            <person name="Tanaka M."/>
            <person name="Tobe T."/>
            <person name="Iida T."/>
            <person name="Takami H."/>
            <person name="Honda T."/>
            <person name="Sasakawa C."/>
            <person name="Ogasawara N."/>
            <person name="Yasunaga T."/>
            <person name="Kuhara S."/>
            <person name="Shiba T."/>
            <person name="Hattori M."/>
            <person name="Shinagawa H."/>
        </authorList>
    </citation>
    <scope>NUCLEOTIDE SEQUENCE [LARGE SCALE GENOMIC DNA]</scope>
    <source>
        <strain>O157:H7 / Sakai / RIMD 0509952 / EHEC</strain>
    </source>
</reference>
<protein>
    <recommendedName>
        <fullName evidence="1">Transcription termination/antitermination protein NusA</fullName>
    </recommendedName>
</protein>
<evidence type="ECO:0000255" key="1">
    <source>
        <dbReference type="HAMAP-Rule" id="MF_00945"/>
    </source>
</evidence>
<gene>
    <name evidence="1" type="primary">nusA</name>
    <name type="ordered locus">Z4530</name>
    <name type="ordered locus">ECs4050</name>
</gene>